<sequence length="185" mass="20823">MIDEILFEAEEHMNTSVERTRDELVNIRTGRANPAMFNGVIADYYGVPTPITQMATISVPEARMLLIKPYEMSMMNEIENAIRNSDLGVNPTNDGQVLRVTIPQLTEERRRDMAKLAKSKGEDGKIAIRNVRRKGMDQLKKIQKDGDAGEDEVQAAEKELDKVTAKYVAQVDEVVAKKEAELMEV</sequence>
<proteinExistence type="inferred from homology"/>
<dbReference type="EMBL" id="BX248358">
    <property type="protein sequence ID" value="CAE50032.1"/>
    <property type="molecule type" value="Genomic_DNA"/>
</dbReference>
<dbReference type="RefSeq" id="WP_010935112.1">
    <property type="nucleotide sequence ID" value="NC_002935.2"/>
</dbReference>
<dbReference type="SMR" id="P61303"/>
<dbReference type="STRING" id="257309.DIP1505"/>
<dbReference type="GeneID" id="97332322"/>
<dbReference type="KEGG" id="cdi:DIP1505"/>
<dbReference type="HOGENOM" id="CLU_073981_2_0_11"/>
<dbReference type="Proteomes" id="UP000002198">
    <property type="component" value="Chromosome"/>
</dbReference>
<dbReference type="GO" id="GO:0005737">
    <property type="term" value="C:cytoplasm"/>
    <property type="evidence" value="ECO:0007669"/>
    <property type="project" value="UniProtKB-SubCell"/>
</dbReference>
<dbReference type="GO" id="GO:0043023">
    <property type="term" value="F:ribosomal large subunit binding"/>
    <property type="evidence" value="ECO:0007669"/>
    <property type="project" value="TreeGrafter"/>
</dbReference>
<dbReference type="GO" id="GO:0006415">
    <property type="term" value="P:translational termination"/>
    <property type="evidence" value="ECO:0007669"/>
    <property type="project" value="UniProtKB-UniRule"/>
</dbReference>
<dbReference type="CDD" id="cd00520">
    <property type="entry name" value="RRF"/>
    <property type="match status" value="1"/>
</dbReference>
<dbReference type="FunFam" id="1.10.132.20:FF:000001">
    <property type="entry name" value="Ribosome-recycling factor"/>
    <property type="match status" value="1"/>
</dbReference>
<dbReference type="FunFam" id="3.30.1360.40:FF:000001">
    <property type="entry name" value="Ribosome-recycling factor"/>
    <property type="match status" value="1"/>
</dbReference>
<dbReference type="Gene3D" id="3.30.1360.40">
    <property type="match status" value="1"/>
</dbReference>
<dbReference type="Gene3D" id="1.10.132.20">
    <property type="entry name" value="Ribosome-recycling factor"/>
    <property type="match status" value="1"/>
</dbReference>
<dbReference type="HAMAP" id="MF_00040">
    <property type="entry name" value="RRF"/>
    <property type="match status" value="1"/>
</dbReference>
<dbReference type="InterPro" id="IPR002661">
    <property type="entry name" value="Ribosome_recyc_fac"/>
</dbReference>
<dbReference type="InterPro" id="IPR023584">
    <property type="entry name" value="Ribosome_recyc_fac_dom"/>
</dbReference>
<dbReference type="InterPro" id="IPR036191">
    <property type="entry name" value="RRF_sf"/>
</dbReference>
<dbReference type="NCBIfam" id="TIGR00496">
    <property type="entry name" value="frr"/>
    <property type="match status" value="1"/>
</dbReference>
<dbReference type="PANTHER" id="PTHR20982:SF3">
    <property type="entry name" value="MITOCHONDRIAL RIBOSOME RECYCLING FACTOR PSEUDO 1"/>
    <property type="match status" value="1"/>
</dbReference>
<dbReference type="PANTHER" id="PTHR20982">
    <property type="entry name" value="RIBOSOME RECYCLING FACTOR"/>
    <property type="match status" value="1"/>
</dbReference>
<dbReference type="Pfam" id="PF01765">
    <property type="entry name" value="RRF"/>
    <property type="match status" value="1"/>
</dbReference>
<dbReference type="SUPFAM" id="SSF55194">
    <property type="entry name" value="Ribosome recycling factor, RRF"/>
    <property type="match status" value="1"/>
</dbReference>
<name>RRF_CORDI</name>
<keyword id="KW-0963">Cytoplasm</keyword>
<keyword id="KW-0648">Protein biosynthesis</keyword>
<keyword id="KW-1185">Reference proteome</keyword>
<gene>
    <name evidence="1" type="primary">frr</name>
    <name type="ordered locus">DIP1505</name>
</gene>
<comment type="function">
    <text evidence="1">Responsible for the release of ribosomes from messenger RNA at the termination of protein biosynthesis. May increase the efficiency of translation by recycling ribosomes from one round of translation to another.</text>
</comment>
<comment type="subcellular location">
    <subcellularLocation>
        <location evidence="1">Cytoplasm</location>
    </subcellularLocation>
</comment>
<comment type="similarity">
    <text evidence="1">Belongs to the RRF family.</text>
</comment>
<evidence type="ECO:0000255" key="1">
    <source>
        <dbReference type="HAMAP-Rule" id="MF_00040"/>
    </source>
</evidence>
<feature type="chain" id="PRO_0000167447" description="Ribosome-recycling factor">
    <location>
        <begin position="1"/>
        <end position="185"/>
    </location>
</feature>
<protein>
    <recommendedName>
        <fullName evidence="1">Ribosome-recycling factor</fullName>
        <shortName evidence="1">RRF</shortName>
    </recommendedName>
    <alternativeName>
        <fullName evidence="1">Ribosome-releasing factor</fullName>
    </alternativeName>
</protein>
<accession>P61303</accession>
<organism>
    <name type="scientific">Corynebacterium diphtheriae (strain ATCC 700971 / NCTC 13129 / Biotype gravis)</name>
    <dbReference type="NCBI Taxonomy" id="257309"/>
    <lineage>
        <taxon>Bacteria</taxon>
        <taxon>Bacillati</taxon>
        <taxon>Actinomycetota</taxon>
        <taxon>Actinomycetes</taxon>
        <taxon>Mycobacteriales</taxon>
        <taxon>Corynebacteriaceae</taxon>
        <taxon>Corynebacterium</taxon>
    </lineage>
</organism>
<reference key="1">
    <citation type="journal article" date="2003" name="Nucleic Acids Res.">
        <title>The complete genome sequence and analysis of Corynebacterium diphtheriae NCTC13129.</title>
        <authorList>
            <person name="Cerdeno-Tarraga A.-M."/>
            <person name="Efstratiou A."/>
            <person name="Dover L.G."/>
            <person name="Holden M.T.G."/>
            <person name="Pallen M.J."/>
            <person name="Bentley S.D."/>
            <person name="Besra G.S."/>
            <person name="Churcher C.M."/>
            <person name="James K.D."/>
            <person name="De Zoysa A."/>
            <person name="Chillingworth T."/>
            <person name="Cronin A."/>
            <person name="Dowd L."/>
            <person name="Feltwell T."/>
            <person name="Hamlin N."/>
            <person name="Holroyd S."/>
            <person name="Jagels K."/>
            <person name="Moule S."/>
            <person name="Quail M.A."/>
            <person name="Rabbinowitsch E."/>
            <person name="Rutherford K.M."/>
            <person name="Thomson N.R."/>
            <person name="Unwin L."/>
            <person name="Whitehead S."/>
            <person name="Barrell B.G."/>
            <person name="Parkhill J."/>
        </authorList>
    </citation>
    <scope>NUCLEOTIDE SEQUENCE [LARGE SCALE GENOMIC DNA]</scope>
    <source>
        <strain>ATCC 700971 / NCTC 13129 / Biotype gravis</strain>
    </source>
</reference>